<name>Y054_NPVOP</name>
<protein>
    <recommendedName>
        <fullName>Uncharacterized 42.5 kDa protein</fullName>
    </recommendedName>
</protein>
<reference key="1">
    <citation type="journal article" date="1997" name="Virology">
        <title>The sequence of the Orgyia pseudotsugata multinucleocapsid nuclear polyhedrosis virus genome.</title>
        <authorList>
            <person name="Ahrens C.H."/>
            <person name="Russell R.R."/>
            <person name="Funk C.J."/>
            <person name="Evans J."/>
            <person name="Harwood S."/>
            <person name="Rohrmann G.F."/>
        </authorList>
    </citation>
    <scope>NUCLEOTIDE SEQUENCE [LARGE SCALE GENOMIC DNA]</scope>
</reference>
<organism>
    <name type="scientific">Orgyia pseudotsugata multicapsid polyhedrosis virus</name>
    <name type="common">OpMNPV</name>
    <dbReference type="NCBI Taxonomy" id="262177"/>
    <lineage>
        <taxon>Viruses</taxon>
        <taxon>Viruses incertae sedis</taxon>
        <taxon>Naldaviricetes</taxon>
        <taxon>Lefavirales</taxon>
        <taxon>Baculoviridae</taxon>
        <taxon>Alphabaculovirus</taxon>
        <taxon>Alphabaculovirus orpseudotsugatae</taxon>
    </lineage>
</organism>
<dbReference type="EMBL" id="U75930">
    <property type="protein sequence ID" value="AAC59057.1"/>
    <property type="molecule type" value="Genomic_DNA"/>
</dbReference>
<dbReference type="RefSeq" id="NP_046214.1">
    <property type="nucleotide sequence ID" value="NC_001875.2"/>
</dbReference>
<dbReference type="KEGG" id="vg:911995"/>
<dbReference type="OrthoDB" id="6189at10239"/>
<dbReference type="Proteomes" id="UP000009248">
    <property type="component" value="Genome"/>
</dbReference>
<dbReference type="InterPro" id="IPR008416">
    <property type="entry name" value="Baculo_VP1054"/>
</dbReference>
<dbReference type="Pfam" id="PF05789">
    <property type="entry name" value="Baculo_VP1054"/>
    <property type="match status" value="1"/>
</dbReference>
<keyword id="KW-1185">Reference proteome</keyword>
<sequence length="378" mass="42546">MSCAKKLVTLNPCTSVKLVPHRPIRATKMQCWMHPRRATCRVQRLRDAYHDERNESSLLHMTVYSDIFLDERARPYYRQLLRKRTDAAAARRAFLNAGQVHDCLLLEPAPSEHFKSIEEAGETNMSTLRTILATLTSFLGRVASTEYFLIVDRLFIDLVYSEFRAVVLPQHAYVLQQACADTDSSDEEPCERGVEPPWNQIVVAAHVAAAHRHEGARYNEWQRQSQYIYQTFLVYATLLTTILKQSNPFIISENSSASVVLRTLGKCPDNPERVNCCKLSYGGAPPGHLMCPPRAIVKKIYRYVNWASNPHKDQRYSALIARPSDAATGAGSGDLRENVDGNLHADDITPLILLDWDNFVSALMDYFGAPPGARPAGI</sequence>
<organismHost>
    <name type="scientific">Orgyia pseudotsugata</name>
    <name type="common">Douglas-fir tussock moth</name>
    <dbReference type="NCBI Taxonomy" id="33414"/>
</organismHost>
<feature type="chain" id="PRO_0000132988" description="Uncharacterized 42.5 kDa protein">
    <location>
        <begin position="1"/>
        <end position="378"/>
    </location>
</feature>
<proteinExistence type="predicted"/>
<gene>
    <name type="ORF">ORF58</name>
</gene>
<accession>O10312</accession>